<comment type="function">
    <text evidence="1">Part of the MsrPQ system that repairs oxidized periplasmic proteins containing methionine sulfoxide residues (Met-O), using respiratory chain electrons. Thus protects these proteins from oxidative-stress damage caused by reactive species of oxygen and chlorine generated by the host defense mechanisms. MsrPQ is essential for the maintenance of envelope integrity under bleach stress, rescuing a wide series of structurally unrelated periplasmic proteins from methionine oxidation, including the primary periplasmic chaperone SurA and the lipoprotein Pal. MsrQ provides electrons for reduction to the reductase catalytic subunit MsrP, using the quinone pool of the respiratory chain.</text>
</comment>
<comment type="cofactor">
    <cofactor evidence="1">
        <name>FMN</name>
        <dbReference type="ChEBI" id="CHEBI:58210"/>
    </cofactor>
    <text evidence="1">Binds 1 FMN per subunit.</text>
</comment>
<comment type="cofactor">
    <cofactor evidence="1">
        <name>heme b</name>
        <dbReference type="ChEBI" id="CHEBI:60344"/>
    </cofactor>
    <text evidence="1">Binds 1 heme b (iron(II)-protoporphyrin IX) group per subunit.</text>
</comment>
<comment type="subunit">
    <text evidence="1">Heterodimer of a catalytic subunit (MsrP) and a heme-binding subunit (MsrQ).</text>
</comment>
<comment type="subcellular location">
    <subcellularLocation>
        <location evidence="1">Cell inner membrane</location>
        <topology evidence="1">Multi-pass membrane protein</topology>
    </subcellularLocation>
</comment>
<comment type="similarity">
    <text evidence="1">Belongs to the MsrQ family.</text>
</comment>
<keyword id="KW-0997">Cell inner membrane</keyword>
<keyword id="KW-1003">Cell membrane</keyword>
<keyword id="KW-0249">Electron transport</keyword>
<keyword id="KW-0285">Flavoprotein</keyword>
<keyword id="KW-0288">FMN</keyword>
<keyword id="KW-0349">Heme</keyword>
<keyword id="KW-0408">Iron</keyword>
<keyword id="KW-0472">Membrane</keyword>
<keyword id="KW-0479">Metal-binding</keyword>
<keyword id="KW-0812">Transmembrane</keyword>
<keyword id="KW-1133">Transmembrane helix</keyword>
<keyword id="KW-0813">Transport</keyword>
<organism>
    <name type="scientific">Salmonella paratyphi A (strain ATCC 9150 / SARB42)</name>
    <dbReference type="NCBI Taxonomy" id="295319"/>
    <lineage>
        <taxon>Bacteria</taxon>
        <taxon>Pseudomonadati</taxon>
        <taxon>Pseudomonadota</taxon>
        <taxon>Gammaproteobacteria</taxon>
        <taxon>Enterobacterales</taxon>
        <taxon>Enterobacteriaceae</taxon>
        <taxon>Salmonella</taxon>
    </lineage>
</organism>
<sequence>MRLTVKQITWLKVCLHLAGFLPLLWLFWAINHGGLSADPVKDIQHFTGRTALKFLLATLLVSPLARYAKQPLLIRTRRLLGLWCFVWATLHLTSYALLELGIHNLALLGSELISRPYLTLGIISWLVLLALTLTSTQFAQRKLGKRWQTLHNVVYLVAILAPIHYLWSVKILSPQPVIYAALALALLALRYRKFRQWWR</sequence>
<feature type="chain" id="PRO_1000085533" description="Protein-methionine-sulfoxide reductase heme-binding subunit MsrQ">
    <location>
        <begin position="1"/>
        <end position="199"/>
    </location>
</feature>
<feature type="transmembrane region" description="Helical" evidence="1">
    <location>
        <begin position="10"/>
        <end position="30"/>
    </location>
</feature>
<feature type="transmembrane region" description="Helical" evidence="1">
    <location>
        <begin position="82"/>
        <end position="102"/>
    </location>
</feature>
<feature type="transmembrane region" description="Helical" evidence="1">
    <location>
        <begin position="116"/>
        <end position="136"/>
    </location>
</feature>
<feature type="transmembrane region" description="Helical" evidence="1">
    <location>
        <begin position="153"/>
        <end position="173"/>
    </location>
</feature>
<reference key="1">
    <citation type="journal article" date="2004" name="Nat. Genet.">
        <title>Comparison of genome degradation in Paratyphi A and Typhi, human-restricted serovars of Salmonella enterica that cause typhoid.</title>
        <authorList>
            <person name="McClelland M."/>
            <person name="Sanderson K.E."/>
            <person name="Clifton S.W."/>
            <person name="Latreille P."/>
            <person name="Porwollik S."/>
            <person name="Sabo A."/>
            <person name="Meyer R."/>
            <person name="Bieri T."/>
            <person name="Ozersky P."/>
            <person name="McLellan M."/>
            <person name="Harkins C.R."/>
            <person name="Wang C."/>
            <person name="Nguyen C."/>
            <person name="Berghoff A."/>
            <person name="Elliott G."/>
            <person name="Kohlberg S."/>
            <person name="Strong C."/>
            <person name="Du F."/>
            <person name="Carter J."/>
            <person name="Kremizki C."/>
            <person name="Layman D."/>
            <person name="Leonard S."/>
            <person name="Sun H."/>
            <person name="Fulton L."/>
            <person name="Nash W."/>
            <person name="Miner T."/>
            <person name="Minx P."/>
            <person name="Delehaunty K."/>
            <person name="Fronick C."/>
            <person name="Magrini V."/>
            <person name="Nhan M."/>
            <person name="Warren W."/>
            <person name="Florea L."/>
            <person name="Spieth J."/>
            <person name="Wilson R.K."/>
        </authorList>
    </citation>
    <scope>NUCLEOTIDE SEQUENCE [LARGE SCALE GENOMIC DNA]</scope>
    <source>
        <strain>ATCC 9150 / SARB42</strain>
    </source>
</reference>
<accession>Q5PJV6</accession>
<dbReference type="EMBL" id="CP000026">
    <property type="protein sequence ID" value="AAV79068.1"/>
    <property type="molecule type" value="Genomic_DNA"/>
</dbReference>
<dbReference type="RefSeq" id="WP_001241496.1">
    <property type="nucleotide sequence ID" value="NC_006511.1"/>
</dbReference>
<dbReference type="SMR" id="Q5PJV6"/>
<dbReference type="KEGG" id="spt:SPA3245"/>
<dbReference type="HOGENOM" id="CLU_080662_1_0_6"/>
<dbReference type="Proteomes" id="UP000008185">
    <property type="component" value="Chromosome"/>
</dbReference>
<dbReference type="GO" id="GO:0005886">
    <property type="term" value="C:plasma membrane"/>
    <property type="evidence" value="ECO:0007669"/>
    <property type="project" value="UniProtKB-SubCell"/>
</dbReference>
<dbReference type="GO" id="GO:0009055">
    <property type="term" value="F:electron transfer activity"/>
    <property type="evidence" value="ECO:0007669"/>
    <property type="project" value="UniProtKB-UniRule"/>
</dbReference>
<dbReference type="GO" id="GO:0010181">
    <property type="term" value="F:FMN binding"/>
    <property type="evidence" value="ECO:0007669"/>
    <property type="project" value="UniProtKB-UniRule"/>
</dbReference>
<dbReference type="GO" id="GO:0020037">
    <property type="term" value="F:heme binding"/>
    <property type="evidence" value="ECO:0007669"/>
    <property type="project" value="UniProtKB-UniRule"/>
</dbReference>
<dbReference type="GO" id="GO:0046872">
    <property type="term" value="F:metal ion binding"/>
    <property type="evidence" value="ECO:0007669"/>
    <property type="project" value="UniProtKB-KW"/>
</dbReference>
<dbReference type="GO" id="GO:0016679">
    <property type="term" value="F:oxidoreductase activity, acting on diphenols and related substances as donors"/>
    <property type="evidence" value="ECO:0007669"/>
    <property type="project" value="TreeGrafter"/>
</dbReference>
<dbReference type="GO" id="GO:0030091">
    <property type="term" value="P:protein repair"/>
    <property type="evidence" value="ECO:0007669"/>
    <property type="project" value="UniProtKB-UniRule"/>
</dbReference>
<dbReference type="HAMAP" id="MF_01207">
    <property type="entry name" value="MsrQ"/>
    <property type="match status" value="1"/>
</dbReference>
<dbReference type="InterPro" id="IPR013130">
    <property type="entry name" value="Fe3_Rdtase_TM_dom"/>
</dbReference>
<dbReference type="InterPro" id="IPR022837">
    <property type="entry name" value="MsrQ-like"/>
</dbReference>
<dbReference type="NCBIfam" id="NF003832">
    <property type="entry name" value="PRK05419.1-4"/>
    <property type="match status" value="1"/>
</dbReference>
<dbReference type="PANTHER" id="PTHR36964">
    <property type="entry name" value="PROTEIN-METHIONINE-SULFOXIDE REDUCTASE HEME-BINDING SUBUNIT MSRQ"/>
    <property type="match status" value="1"/>
</dbReference>
<dbReference type="PANTHER" id="PTHR36964:SF1">
    <property type="entry name" value="PROTEIN-METHIONINE-SULFOXIDE REDUCTASE HEME-BINDING SUBUNIT MSRQ"/>
    <property type="match status" value="1"/>
</dbReference>
<dbReference type="Pfam" id="PF01794">
    <property type="entry name" value="Ferric_reduct"/>
    <property type="match status" value="1"/>
</dbReference>
<gene>
    <name evidence="1" type="primary">msrQ</name>
    <name type="ordered locus">SPA3245</name>
</gene>
<proteinExistence type="inferred from homology"/>
<protein>
    <recommendedName>
        <fullName evidence="1">Protein-methionine-sulfoxide reductase heme-binding subunit MsrQ</fullName>
    </recommendedName>
    <alternativeName>
        <fullName evidence="1">Flavocytochrome MsrQ</fullName>
    </alternativeName>
</protein>
<evidence type="ECO:0000255" key="1">
    <source>
        <dbReference type="HAMAP-Rule" id="MF_01207"/>
    </source>
</evidence>
<name>MSRQ_SALPA</name>